<evidence type="ECO:0000256" key="1">
    <source>
        <dbReference type="SAM" id="MobiDB-lite"/>
    </source>
</evidence>
<sequence length="23" mass="2689">KAEEEVEKNKEEAEEKAEKKIAE</sequence>
<organism>
    <name type="scientific">Enterobacteria phage T6</name>
    <name type="common">Bacteriophage T6</name>
    <dbReference type="NCBI Taxonomy" id="10666"/>
    <lineage>
        <taxon>Viruses</taxon>
        <taxon>Duplodnaviria</taxon>
        <taxon>Heunggongvirae</taxon>
        <taxon>Uroviricota</taxon>
        <taxon>Caudoviricetes</taxon>
        <taxon>Straboviridae</taxon>
        <taxon>Tevenvirinae</taxon>
        <taxon>Tequatrovirus</taxon>
        <taxon>Tequatrovirus T6</taxon>
    </lineage>
</organism>
<proteinExistence type="evidence at protein level"/>
<feature type="peptide" id="PRO_0000003337" description="Internal peptide VII">
    <location>
        <begin position="1"/>
        <end position="23"/>
    </location>
</feature>
<feature type="region of interest" description="Disordered" evidence="1">
    <location>
        <begin position="1"/>
        <end position="23"/>
    </location>
</feature>
<feature type="compositionally biased region" description="Basic and acidic residues" evidence="1">
    <location>
        <begin position="7"/>
        <end position="23"/>
    </location>
</feature>
<feature type="non-terminal residue">
    <location>
        <position position="1"/>
    </location>
</feature>
<feature type="non-terminal residue">
    <location>
        <position position="23"/>
    </location>
</feature>
<protein>
    <recommendedName>
        <fullName>Major prohead-scaffolding core protein Gp22</fullName>
    </recommendedName>
    <component>
        <recommendedName>
            <fullName>Internal peptide VII</fullName>
        </recommendedName>
    </component>
</protein>
<accession>P21597</accession>
<reference key="1">
    <citation type="journal article" date="1977" name="J. Mol. Biol.">
        <title>Primary structure of internal peptide VII of T-even bacteriophages.</title>
        <authorList>
            <person name="van Eerd J.P."/>
            <person name="Champe S.P."/>
            <person name="Yager L."/>
            <person name="Kubota I."/>
            <person name="Tsugita A."/>
        </authorList>
    </citation>
    <scope>PROTEIN SEQUENCE</scope>
</reference>
<name>VG22_BPT6</name>
<gene>
    <name type="primary">22</name>
</gene>
<comment type="function">
    <text>Gp22 functions in head assembly.</text>
</comment>
<comment type="function">
    <text>Internal peptide VII: Cleavage product of Gp22 that is incorporated into the mature phage head.</text>
</comment>
<dbReference type="PIR" id="B04348">
    <property type="entry name" value="B04348"/>
</dbReference>
<organismHost>
    <name type="scientific">Escherichia coli</name>
    <dbReference type="NCBI Taxonomy" id="562"/>
</organismHost>
<keyword id="KW-0903">Direct protein sequencing</keyword>